<sequence length="274" mass="29735">MSQIKPSRLSSSAEIRGARQLDVLQRHKLAEPQQDWLAEEVPVALVYNGISHVVMMATPKDLAAFALGFSLSEGIISSPQEIYSIEMTPGCNGIEVNIELSSRRFAGLKERRRAMAGRTGCGVCGIEQLDDIFRPITPLPFTQAFNLEHLDTALAQLKQVQPVGQLTGCTHAAAWINPEGELLGGCEDVGRHVALDKLLGIRAKQPWQQGAVLVSSRASYEMVQKTAMCGAEILFAVSAATTLAVEVAERCNLTLVGFSKPGRATVYTHPQRIK</sequence>
<gene>
    <name evidence="1" type="primary">fdhD</name>
    <name type="ordered locus">YPDSF_0033</name>
</gene>
<keyword id="KW-0963">Cytoplasm</keyword>
<keyword id="KW-0501">Molybdenum cofactor biosynthesis</keyword>
<comment type="function">
    <text evidence="1">Required for formate dehydrogenase (FDH) activity. Acts as a sulfur carrier protein that transfers sulfur from IscS to the molybdenum cofactor prior to its insertion into FDH.</text>
</comment>
<comment type="subcellular location">
    <subcellularLocation>
        <location evidence="1">Cytoplasm</location>
    </subcellularLocation>
</comment>
<comment type="similarity">
    <text evidence="1">Belongs to the FdhD family.</text>
</comment>
<accession>A4TGP7</accession>
<dbReference type="EMBL" id="CP000668">
    <property type="protein sequence ID" value="ABP38460.1"/>
    <property type="molecule type" value="Genomic_DNA"/>
</dbReference>
<dbReference type="RefSeq" id="WP_002209612.1">
    <property type="nucleotide sequence ID" value="NZ_CP009715.1"/>
</dbReference>
<dbReference type="SMR" id="A4TGP7"/>
<dbReference type="GeneID" id="57974655"/>
<dbReference type="KEGG" id="ypp:YPDSF_0033"/>
<dbReference type="PATRIC" id="fig|386656.14.peg.540"/>
<dbReference type="GO" id="GO:0005737">
    <property type="term" value="C:cytoplasm"/>
    <property type="evidence" value="ECO:0007669"/>
    <property type="project" value="UniProtKB-SubCell"/>
</dbReference>
<dbReference type="GO" id="GO:0097163">
    <property type="term" value="F:sulfur carrier activity"/>
    <property type="evidence" value="ECO:0007669"/>
    <property type="project" value="UniProtKB-UniRule"/>
</dbReference>
<dbReference type="GO" id="GO:0016783">
    <property type="term" value="F:sulfurtransferase activity"/>
    <property type="evidence" value="ECO:0007669"/>
    <property type="project" value="InterPro"/>
</dbReference>
<dbReference type="GO" id="GO:0006777">
    <property type="term" value="P:Mo-molybdopterin cofactor biosynthetic process"/>
    <property type="evidence" value="ECO:0007669"/>
    <property type="project" value="UniProtKB-UniRule"/>
</dbReference>
<dbReference type="Gene3D" id="3.10.20.10">
    <property type="match status" value="1"/>
</dbReference>
<dbReference type="Gene3D" id="3.40.140.10">
    <property type="entry name" value="Cytidine Deaminase, domain 2"/>
    <property type="match status" value="1"/>
</dbReference>
<dbReference type="HAMAP" id="MF_00187">
    <property type="entry name" value="FdhD"/>
    <property type="match status" value="1"/>
</dbReference>
<dbReference type="InterPro" id="IPR016193">
    <property type="entry name" value="Cytidine_deaminase-like"/>
</dbReference>
<dbReference type="InterPro" id="IPR003786">
    <property type="entry name" value="FdhD"/>
</dbReference>
<dbReference type="NCBIfam" id="TIGR00129">
    <property type="entry name" value="fdhD_narQ"/>
    <property type="match status" value="1"/>
</dbReference>
<dbReference type="PANTHER" id="PTHR30592">
    <property type="entry name" value="FORMATE DEHYDROGENASE"/>
    <property type="match status" value="1"/>
</dbReference>
<dbReference type="PANTHER" id="PTHR30592:SF1">
    <property type="entry name" value="SULFUR CARRIER PROTEIN FDHD"/>
    <property type="match status" value="1"/>
</dbReference>
<dbReference type="Pfam" id="PF02634">
    <property type="entry name" value="FdhD-NarQ"/>
    <property type="match status" value="1"/>
</dbReference>
<dbReference type="PIRSF" id="PIRSF015626">
    <property type="entry name" value="FdhD"/>
    <property type="match status" value="1"/>
</dbReference>
<dbReference type="SUPFAM" id="SSF53927">
    <property type="entry name" value="Cytidine deaminase-like"/>
    <property type="match status" value="1"/>
</dbReference>
<reference key="1">
    <citation type="submission" date="2007-02" db="EMBL/GenBank/DDBJ databases">
        <title>Complete sequence of chromosome of Yersinia pestis Pestoides F.</title>
        <authorList>
            <consortium name="US DOE Joint Genome Institute"/>
            <person name="Copeland A."/>
            <person name="Lucas S."/>
            <person name="Lapidus A."/>
            <person name="Barry K."/>
            <person name="Detter J.C."/>
            <person name="Glavina del Rio T."/>
            <person name="Hammon N."/>
            <person name="Israni S."/>
            <person name="Dalin E."/>
            <person name="Tice H."/>
            <person name="Pitluck S."/>
            <person name="Di Bartolo G."/>
            <person name="Chain P."/>
            <person name="Malfatti S."/>
            <person name="Shin M."/>
            <person name="Vergez L."/>
            <person name="Schmutz J."/>
            <person name="Larimer F."/>
            <person name="Land M."/>
            <person name="Hauser L."/>
            <person name="Worsham P."/>
            <person name="Chu M."/>
            <person name="Bearden S."/>
            <person name="Garcia E."/>
            <person name="Richardson P."/>
        </authorList>
    </citation>
    <scope>NUCLEOTIDE SEQUENCE [LARGE SCALE GENOMIC DNA]</scope>
    <source>
        <strain>Pestoides F</strain>
    </source>
</reference>
<organism>
    <name type="scientific">Yersinia pestis (strain Pestoides F)</name>
    <dbReference type="NCBI Taxonomy" id="386656"/>
    <lineage>
        <taxon>Bacteria</taxon>
        <taxon>Pseudomonadati</taxon>
        <taxon>Pseudomonadota</taxon>
        <taxon>Gammaproteobacteria</taxon>
        <taxon>Enterobacterales</taxon>
        <taxon>Yersiniaceae</taxon>
        <taxon>Yersinia</taxon>
    </lineage>
</organism>
<proteinExistence type="inferred from homology"/>
<evidence type="ECO:0000255" key="1">
    <source>
        <dbReference type="HAMAP-Rule" id="MF_00187"/>
    </source>
</evidence>
<name>FDHD_YERPP</name>
<protein>
    <recommendedName>
        <fullName evidence="1">Sulfur carrier protein FdhD</fullName>
    </recommendedName>
</protein>
<feature type="chain" id="PRO_1000020833" description="Sulfur carrier protein FdhD">
    <location>
        <begin position="1"/>
        <end position="274"/>
    </location>
</feature>
<feature type="active site" description="Cysteine persulfide intermediate" evidence="1">
    <location>
        <position position="121"/>
    </location>
</feature>
<feature type="binding site" evidence="1">
    <location>
        <begin position="258"/>
        <end position="263"/>
    </location>
    <ligand>
        <name>Mo-bis(molybdopterin guanine dinucleotide)</name>
        <dbReference type="ChEBI" id="CHEBI:60539"/>
    </ligand>
</feature>